<reference key="1">
    <citation type="journal article" date="2009" name="PLoS Genet.">
        <title>Organised genome dynamics in the Escherichia coli species results in highly diverse adaptive paths.</title>
        <authorList>
            <person name="Touchon M."/>
            <person name="Hoede C."/>
            <person name="Tenaillon O."/>
            <person name="Barbe V."/>
            <person name="Baeriswyl S."/>
            <person name="Bidet P."/>
            <person name="Bingen E."/>
            <person name="Bonacorsi S."/>
            <person name="Bouchier C."/>
            <person name="Bouvet O."/>
            <person name="Calteau A."/>
            <person name="Chiapello H."/>
            <person name="Clermont O."/>
            <person name="Cruveiller S."/>
            <person name="Danchin A."/>
            <person name="Diard M."/>
            <person name="Dossat C."/>
            <person name="Karoui M.E."/>
            <person name="Frapy E."/>
            <person name="Garry L."/>
            <person name="Ghigo J.M."/>
            <person name="Gilles A.M."/>
            <person name="Johnson J."/>
            <person name="Le Bouguenec C."/>
            <person name="Lescat M."/>
            <person name="Mangenot S."/>
            <person name="Martinez-Jehanne V."/>
            <person name="Matic I."/>
            <person name="Nassif X."/>
            <person name="Oztas S."/>
            <person name="Petit M.A."/>
            <person name="Pichon C."/>
            <person name="Rouy Z."/>
            <person name="Ruf C.S."/>
            <person name="Schneider D."/>
            <person name="Tourret J."/>
            <person name="Vacherie B."/>
            <person name="Vallenet D."/>
            <person name="Medigue C."/>
            <person name="Rocha E.P.C."/>
            <person name="Denamur E."/>
        </authorList>
    </citation>
    <scope>NUCLEOTIDE SEQUENCE [LARGE SCALE GENOMIC DNA]</scope>
    <source>
        <strain>ED1a</strain>
    </source>
</reference>
<sequence length="91" mass="10953">MSRTIFCTFLQREAEGQDFQLYPGELGKRIYNEISKEAWAQWQHKQTMLINEKKLNMMNAEHRKLLEQEMVNFLFEGKEVHIEGYTPEDKK</sequence>
<feature type="chain" id="PRO_1000147766" description="Probable Fe(2+)-trafficking protein">
    <location>
        <begin position="1"/>
        <end position="91"/>
    </location>
</feature>
<organism>
    <name type="scientific">Escherichia coli O81 (strain ED1a)</name>
    <dbReference type="NCBI Taxonomy" id="585397"/>
    <lineage>
        <taxon>Bacteria</taxon>
        <taxon>Pseudomonadati</taxon>
        <taxon>Pseudomonadota</taxon>
        <taxon>Gammaproteobacteria</taxon>
        <taxon>Enterobacterales</taxon>
        <taxon>Enterobacteriaceae</taxon>
        <taxon>Escherichia</taxon>
    </lineage>
</organism>
<dbReference type="EMBL" id="CU928162">
    <property type="protein sequence ID" value="CAR09579.2"/>
    <property type="molecule type" value="Genomic_DNA"/>
</dbReference>
<dbReference type="RefSeq" id="WP_000091700.1">
    <property type="nucleotide sequence ID" value="NC_011745.1"/>
</dbReference>
<dbReference type="SMR" id="B7MZR1"/>
<dbReference type="KEGG" id="ecq:ECED1_3425"/>
<dbReference type="HOGENOM" id="CLU_170994_0_0_6"/>
<dbReference type="Proteomes" id="UP000000748">
    <property type="component" value="Chromosome"/>
</dbReference>
<dbReference type="GO" id="GO:0005829">
    <property type="term" value="C:cytosol"/>
    <property type="evidence" value="ECO:0007669"/>
    <property type="project" value="TreeGrafter"/>
</dbReference>
<dbReference type="GO" id="GO:0005506">
    <property type="term" value="F:iron ion binding"/>
    <property type="evidence" value="ECO:0007669"/>
    <property type="project" value="UniProtKB-UniRule"/>
</dbReference>
<dbReference type="GO" id="GO:0034599">
    <property type="term" value="P:cellular response to oxidative stress"/>
    <property type="evidence" value="ECO:0007669"/>
    <property type="project" value="TreeGrafter"/>
</dbReference>
<dbReference type="FunFam" id="1.10.3880.10:FF:000001">
    <property type="entry name" value="Probable Fe(2+)-trafficking protein"/>
    <property type="match status" value="1"/>
</dbReference>
<dbReference type="Gene3D" id="1.10.3880.10">
    <property type="entry name" value="Fe(II) trafficking protein YggX"/>
    <property type="match status" value="1"/>
</dbReference>
<dbReference type="HAMAP" id="MF_00686">
    <property type="entry name" value="Fe_traffic_YggX"/>
    <property type="match status" value="1"/>
</dbReference>
<dbReference type="InterPro" id="IPR007457">
    <property type="entry name" value="Fe_traffick_prot_YggX"/>
</dbReference>
<dbReference type="InterPro" id="IPR036766">
    <property type="entry name" value="Fe_traffick_prot_YggX_sf"/>
</dbReference>
<dbReference type="NCBIfam" id="NF003817">
    <property type="entry name" value="PRK05408.1"/>
    <property type="match status" value="1"/>
</dbReference>
<dbReference type="PANTHER" id="PTHR36965">
    <property type="entry name" value="FE(2+)-TRAFFICKING PROTEIN-RELATED"/>
    <property type="match status" value="1"/>
</dbReference>
<dbReference type="PANTHER" id="PTHR36965:SF1">
    <property type="entry name" value="FE(2+)-TRAFFICKING PROTEIN-RELATED"/>
    <property type="match status" value="1"/>
</dbReference>
<dbReference type="Pfam" id="PF04362">
    <property type="entry name" value="Iron_traffic"/>
    <property type="match status" value="1"/>
</dbReference>
<dbReference type="PIRSF" id="PIRSF029827">
    <property type="entry name" value="Fe_traffic_YggX"/>
    <property type="match status" value="1"/>
</dbReference>
<dbReference type="SUPFAM" id="SSF111148">
    <property type="entry name" value="YggX-like"/>
    <property type="match status" value="1"/>
</dbReference>
<name>FETP_ECO81</name>
<protein>
    <recommendedName>
        <fullName evidence="1">Probable Fe(2+)-trafficking protein</fullName>
    </recommendedName>
</protein>
<keyword id="KW-0408">Iron</keyword>
<accession>B7MZR1</accession>
<evidence type="ECO:0000255" key="1">
    <source>
        <dbReference type="HAMAP-Rule" id="MF_00686"/>
    </source>
</evidence>
<comment type="function">
    <text evidence="1">Could be a mediator in iron transactions between iron acquisition and iron-requiring processes, such as synthesis and/or repair of Fe-S clusters in biosynthetic enzymes.</text>
</comment>
<comment type="subunit">
    <text evidence="1">Monomer.</text>
</comment>
<comment type="similarity">
    <text evidence="1">Belongs to the Fe(2+)-trafficking protein family.</text>
</comment>
<gene>
    <name evidence="1" type="primary">yggX</name>
    <name type="ordered locus">ECED1_3425</name>
</gene>
<proteinExistence type="inferred from homology"/>